<keyword id="KW-0025">Alternative splicing</keyword>
<keyword id="KW-0444">Lipid biosynthesis</keyword>
<keyword id="KW-0443">Lipid metabolism</keyword>
<keyword id="KW-0460">Magnesium</keyword>
<keyword id="KW-0472">Membrane</keyword>
<keyword id="KW-0496">Mitochondrion</keyword>
<keyword id="KW-0999">Mitochondrion inner membrane</keyword>
<keyword id="KW-0548">Nucleotidyltransferase</keyword>
<keyword id="KW-0594">Phospholipid biosynthesis</keyword>
<keyword id="KW-1208">Phospholipid metabolism</keyword>
<keyword id="KW-1274">Primary mitochondrial disease</keyword>
<keyword id="KW-1267">Proteomics identification</keyword>
<keyword id="KW-1185">Reference proteome</keyword>
<keyword id="KW-0808">Transferase</keyword>
<accession>Q96BW9</accession>
<accession>B4DIY7</accession>
<accession>C9J2U4</accession>
<dbReference type="EC" id="2.7.7.41" evidence="1"/>
<dbReference type="EMBL" id="AK295839">
    <property type="protein sequence ID" value="BAG58649.1"/>
    <property type="molecule type" value="mRNA"/>
</dbReference>
<dbReference type="EMBL" id="AC090939">
    <property type="status" value="NOT_ANNOTATED_CDS"/>
    <property type="molecule type" value="Genomic_DNA"/>
</dbReference>
<dbReference type="EMBL" id="AC090958">
    <property type="status" value="NOT_ANNOTATED_CDS"/>
    <property type="molecule type" value="Genomic_DNA"/>
</dbReference>
<dbReference type="EMBL" id="CH471055">
    <property type="protein sequence ID" value="EAW64113.1"/>
    <property type="molecule type" value="Genomic_DNA"/>
</dbReference>
<dbReference type="EMBL" id="BC015088">
    <property type="protein sequence ID" value="AAH15088.1"/>
    <property type="molecule type" value="mRNA"/>
</dbReference>
<dbReference type="CCDS" id="CCDS2607.1">
    <molecule id="Q96BW9-2"/>
</dbReference>
<dbReference type="CCDS" id="CCDS68345.1">
    <molecule id="Q96BW9-3"/>
</dbReference>
<dbReference type="CCDS" id="CCDS93211.1">
    <molecule id="Q96BW9-1"/>
</dbReference>
<dbReference type="RefSeq" id="NP_001271330.1">
    <molecule id="Q96BW9-3"/>
    <property type="nucleotide sequence ID" value="NM_001284401.2"/>
</dbReference>
<dbReference type="RefSeq" id="NP_001308223.1">
    <property type="nucleotide sequence ID" value="NM_001321294.1"/>
</dbReference>
<dbReference type="RefSeq" id="NP_001308224.1">
    <property type="nucleotide sequence ID" value="NM_001321295.1"/>
</dbReference>
<dbReference type="RefSeq" id="NP_001381403.1">
    <molecule id="Q96BW9-1"/>
    <property type="nucleotide sequence ID" value="NM_001394474.1"/>
</dbReference>
<dbReference type="RefSeq" id="NP_620162.1">
    <molecule id="Q96BW9-2"/>
    <property type="nucleotide sequence ID" value="NM_138807.4"/>
</dbReference>
<dbReference type="RefSeq" id="XP_005264930.1">
    <property type="nucleotide sequence ID" value="XM_005264873.3"/>
</dbReference>
<dbReference type="SMR" id="Q96BW9"/>
<dbReference type="BioGRID" id="126303">
    <property type="interactions" value="64"/>
</dbReference>
<dbReference type="FunCoup" id="Q96BW9">
    <property type="interactions" value="1572"/>
</dbReference>
<dbReference type="IntAct" id="Q96BW9">
    <property type="interactions" value="43"/>
</dbReference>
<dbReference type="MINT" id="Q96BW9"/>
<dbReference type="STRING" id="9606.ENSP00000398596"/>
<dbReference type="GlyGen" id="Q96BW9">
    <property type="glycosylation" value="1 site, 1 O-linked glycan (1 site)"/>
</dbReference>
<dbReference type="iPTMnet" id="Q96BW9"/>
<dbReference type="PhosphoSitePlus" id="Q96BW9"/>
<dbReference type="SwissPalm" id="Q96BW9"/>
<dbReference type="BioMuta" id="TAMM41"/>
<dbReference type="DMDM" id="74731287"/>
<dbReference type="jPOST" id="Q96BW9"/>
<dbReference type="MassIVE" id="Q96BW9"/>
<dbReference type="PaxDb" id="9606-ENSP00000398596"/>
<dbReference type="PeptideAtlas" id="Q96BW9"/>
<dbReference type="ProteomicsDB" id="4336"/>
<dbReference type="ProteomicsDB" id="76124">
    <molecule id="Q96BW9-1"/>
</dbReference>
<dbReference type="ProteomicsDB" id="8254"/>
<dbReference type="Pumba" id="Q96BW9"/>
<dbReference type="Antibodypedia" id="26127">
    <property type="antibodies" value="182 antibodies from 25 providers"/>
</dbReference>
<dbReference type="DNASU" id="132001"/>
<dbReference type="Ensembl" id="ENST00000273037.9">
    <molecule id="Q96BW9-2"/>
    <property type="protein sequence ID" value="ENSP00000273037.5"/>
    <property type="gene ID" value="ENSG00000144559.11"/>
</dbReference>
<dbReference type="Ensembl" id="ENST00000444133.6">
    <molecule id="Q96BW9-1"/>
    <property type="protein sequence ID" value="ENSP00000388598.2"/>
    <property type="gene ID" value="ENSG00000144559.11"/>
</dbReference>
<dbReference type="Ensembl" id="ENST00000455809.6">
    <molecule id="Q96BW9-3"/>
    <property type="protein sequence ID" value="ENSP00000398596.1"/>
    <property type="gene ID" value="ENSG00000144559.11"/>
</dbReference>
<dbReference type="GeneID" id="132001"/>
<dbReference type="KEGG" id="hsa:132001"/>
<dbReference type="MANE-Select" id="ENST00000455809.6">
    <molecule id="Q96BW9-3"/>
    <property type="protein sequence ID" value="ENSP00000398596.1"/>
    <property type="RefSeq nucleotide sequence ID" value="NM_001284401.2"/>
    <property type="RefSeq protein sequence ID" value="NP_001271330.1"/>
</dbReference>
<dbReference type="UCSC" id="uc003bwh.4">
    <molecule id="Q96BW9-1"/>
    <property type="organism name" value="human"/>
</dbReference>
<dbReference type="AGR" id="HGNC:25187"/>
<dbReference type="CTD" id="132001"/>
<dbReference type="DisGeNET" id="132001"/>
<dbReference type="GeneCards" id="TAMM41"/>
<dbReference type="HGNC" id="HGNC:25187">
    <property type="gene designation" value="TAMM41"/>
</dbReference>
<dbReference type="HPA" id="ENSG00000144559">
    <property type="expression patterns" value="Low tissue specificity"/>
</dbReference>
<dbReference type="MalaCards" id="TAMM41"/>
<dbReference type="MIM" id="614948">
    <property type="type" value="gene"/>
</dbReference>
<dbReference type="MIM" id="620139">
    <property type="type" value="phenotype"/>
</dbReference>
<dbReference type="neXtProt" id="NX_Q96BW9"/>
<dbReference type="OpenTargets" id="ENSG00000144559"/>
<dbReference type="PharmGKB" id="PA142672392"/>
<dbReference type="VEuPathDB" id="HostDB:ENSG00000144559"/>
<dbReference type="eggNOG" id="KOG2986">
    <property type="taxonomic scope" value="Eukaryota"/>
</dbReference>
<dbReference type="GeneTree" id="ENSGT00390000000616"/>
<dbReference type="HOGENOM" id="CLU_030279_1_2_1"/>
<dbReference type="InParanoid" id="Q96BW9"/>
<dbReference type="OMA" id="HAENMHR"/>
<dbReference type="OrthoDB" id="341477at2759"/>
<dbReference type="PAN-GO" id="Q96BW9">
    <property type="GO annotations" value="4 GO annotations based on evolutionary models"/>
</dbReference>
<dbReference type="PhylomeDB" id="Q96BW9"/>
<dbReference type="TreeFam" id="TF314503"/>
<dbReference type="PathwayCommons" id="Q96BW9"/>
<dbReference type="SignaLink" id="Q96BW9"/>
<dbReference type="UniPathway" id="UPA00557">
    <property type="reaction ID" value="UER00614"/>
</dbReference>
<dbReference type="BioGRID-ORCS" id="132001">
    <property type="hits" value="553 hits in 1176 CRISPR screens"/>
</dbReference>
<dbReference type="ChiTaRS" id="TAMM41">
    <property type="organism name" value="human"/>
</dbReference>
<dbReference type="GenomeRNAi" id="132001"/>
<dbReference type="Pharos" id="Q96BW9">
    <property type="development level" value="Tbio"/>
</dbReference>
<dbReference type="PRO" id="PR:Q96BW9"/>
<dbReference type="Proteomes" id="UP000005640">
    <property type="component" value="Chromosome 3"/>
</dbReference>
<dbReference type="RNAct" id="Q96BW9">
    <property type="molecule type" value="protein"/>
</dbReference>
<dbReference type="Bgee" id="ENSG00000144559">
    <property type="expression patterns" value="Expressed in primordial germ cell in gonad and 106 other cell types or tissues"/>
</dbReference>
<dbReference type="ExpressionAtlas" id="Q96BW9">
    <property type="expression patterns" value="baseline and differential"/>
</dbReference>
<dbReference type="GO" id="GO:0005743">
    <property type="term" value="C:mitochondrial inner membrane"/>
    <property type="evidence" value="ECO:0000250"/>
    <property type="project" value="UniProtKB"/>
</dbReference>
<dbReference type="GO" id="GO:0005739">
    <property type="term" value="C:mitochondrion"/>
    <property type="evidence" value="ECO:0000314"/>
    <property type="project" value="FlyBase"/>
</dbReference>
<dbReference type="GO" id="GO:0004605">
    <property type="term" value="F:phosphatidate cytidylyltransferase activity"/>
    <property type="evidence" value="ECO:0000250"/>
    <property type="project" value="UniProtKB"/>
</dbReference>
<dbReference type="GO" id="GO:0032049">
    <property type="term" value="P:cardiolipin biosynthetic process"/>
    <property type="evidence" value="ECO:0000250"/>
    <property type="project" value="UniProtKB"/>
</dbReference>
<dbReference type="GO" id="GO:0016024">
    <property type="term" value="P:CDP-diacylglycerol biosynthetic process"/>
    <property type="evidence" value="ECO:0000318"/>
    <property type="project" value="GO_Central"/>
</dbReference>
<dbReference type="InterPro" id="IPR015222">
    <property type="entry name" value="Tam41"/>
</dbReference>
<dbReference type="PANTHER" id="PTHR13619">
    <property type="entry name" value="PHOSPHATIDATE CYTIDYLYLTRANSFERASE, MITOCHONDRIAL"/>
    <property type="match status" value="1"/>
</dbReference>
<dbReference type="PANTHER" id="PTHR13619:SF0">
    <property type="entry name" value="PHOSPHATIDATE CYTIDYLYLTRANSFERASE, MITOCHONDRIAL"/>
    <property type="match status" value="1"/>
</dbReference>
<dbReference type="Pfam" id="PF09139">
    <property type="entry name" value="Tam41_Mmp37"/>
    <property type="match status" value="1"/>
</dbReference>
<evidence type="ECO:0000250" key="1">
    <source>
        <dbReference type="UniProtKB" id="D3ZKT0"/>
    </source>
</evidence>
<evidence type="ECO:0000250" key="2">
    <source>
        <dbReference type="UniProtKB" id="P53230"/>
    </source>
</evidence>
<evidence type="ECO:0000269" key="3">
    <source>
    </source>
</evidence>
<evidence type="ECO:0000303" key="4">
    <source>
    </source>
</evidence>
<evidence type="ECO:0000305" key="5"/>
<name>TAM41_HUMAN</name>
<protein>
    <recommendedName>
        <fullName>Phosphatidate cytidylyltransferase, mitochondrial</fullName>
        <ecNumber evidence="1">2.7.7.41</ecNumber>
    </recommendedName>
    <alternativeName>
        <fullName>CDP-diacylglycerol synthase</fullName>
        <shortName>CDP-DAG synthase</shortName>
    </alternativeName>
    <alternativeName>
        <fullName>Mitochondrial translocator assembly and maintenance protein 41 homolog</fullName>
        <shortName>TAM41</shortName>
    </alternativeName>
</protein>
<feature type="chain" id="PRO_0000248354" description="Phosphatidate cytidylyltransferase, mitochondrial">
    <location>
        <begin position="1"/>
        <end position="452"/>
    </location>
</feature>
<feature type="splice variant" id="VSP_053905" description="In isoform 2." evidence="4">
    <original>SAIVRPSSIRQSTKGIFTAGKSF</original>
    <variation>KKSVIYSSLKLHKMWKGWLRKTS</variation>
    <location>
        <begin position="294"/>
        <end position="316"/>
    </location>
</feature>
<feature type="splice variant" id="VSP_055724" description="In isoform 3." evidence="5">
    <original>KSFGNPCVTYLLTEWLPHSWLQCK</original>
    <variation>LKKSVIYSSLKLHKMWKGWLRKTS</variation>
    <location>
        <begin position="314"/>
        <end position="337"/>
    </location>
</feature>
<feature type="splice variant" id="VSP_053906" description="In isoform 2." evidence="4">
    <location>
        <begin position="317"/>
        <end position="452"/>
    </location>
</feature>
<feature type="splice variant" id="VSP_055725" description="In isoform 3." evidence="5">
    <location>
        <begin position="338"/>
        <end position="452"/>
    </location>
</feature>
<feature type="sequence variant" id="VAR_087807" description="In COXPD56; uncertain significance; compared to wild-type, only partly rescues the growth defect in deficient yeast, when tested on respiratory media at 36 degrees Celsius; dbSNP:rs199871047." evidence="3">
    <original>S</original>
    <variation>P</variation>
    <location>
        <position position="86"/>
    </location>
</feature>
<feature type="sequence variant" id="VAR_087808" description="In COXPD56; uncertain significance; contrary to wild-type, unable to complement the growth defect in deficient yeast; dbSNP:rs2125058823." evidence="3">
    <original>Y</original>
    <variation>C</variation>
    <location>
        <position position="110"/>
    </location>
</feature>
<feature type="sequence variant" id="VAR_027276" description="In dbSNP:rs7641243.">
    <original>N</original>
    <variation>S</variation>
    <location>
        <position position="116"/>
    </location>
</feature>
<feature type="sequence variant" id="VAR_087809" description="In COXPD56; uncertain significance; contrary to wild-type, unable to complement the growth defect in deficient yeast; dbSNP:rs775491404." evidence="3">
    <original>P</original>
    <variation>L</variation>
    <location>
        <position position="137"/>
    </location>
</feature>
<feature type="sequence variant" id="VAR_053649" description="In dbSNP:rs11551661.">
    <original>I</original>
    <variation>V</variation>
    <location>
        <position position="179"/>
    </location>
</feature>
<reference key="1">
    <citation type="journal article" date="2004" name="Nat. Genet.">
        <title>Complete sequencing and characterization of 21,243 full-length human cDNAs.</title>
        <authorList>
            <person name="Ota T."/>
            <person name="Suzuki Y."/>
            <person name="Nishikawa T."/>
            <person name="Otsuki T."/>
            <person name="Sugiyama T."/>
            <person name="Irie R."/>
            <person name="Wakamatsu A."/>
            <person name="Hayashi K."/>
            <person name="Sato H."/>
            <person name="Nagai K."/>
            <person name="Kimura K."/>
            <person name="Makita H."/>
            <person name="Sekine M."/>
            <person name="Obayashi M."/>
            <person name="Nishi T."/>
            <person name="Shibahara T."/>
            <person name="Tanaka T."/>
            <person name="Ishii S."/>
            <person name="Yamamoto J."/>
            <person name="Saito K."/>
            <person name="Kawai Y."/>
            <person name="Isono Y."/>
            <person name="Nakamura Y."/>
            <person name="Nagahari K."/>
            <person name="Murakami K."/>
            <person name="Yasuda T."/>
            <person name="Iwayanagi T."/>
            <person name="Wagatsuma M."/>
            <person name="Shiratori A."/>
            <person name="Sudo H."/>
            <person name="Hosoiri T."/>
            <person name="Kaku Y."/>
            <person name="Kodaira H."/>
            <person name="Kondo H."/>
            <person name="Sugawara M."/>
            <person name="Takahashi M."/>
            <person name="Kanda K."/>
            <person name="Yokoi T."/>
            <person name="Furuya T."/>
            <person name="Kikkawa E."/>
            <person name="Omura Y."/>
            <person name="Abe K."/>
            <person name="Kamihara K."/>
            <person name="Katsuta N."/>
            <person name="Sato K."/>
            <person name="Tanikawa M."/>
            <person name="Yamazaki M."/>
            <person name="Ninomiya K."/>
            <person name="Ishibashi T."/>
            <person name="Yamashita H."/>
            <person name="Murakawa K."/>
            <person name="Fujimori K."/>
            <person name="Tanai H."/>
            <person name="Kimata M."/>
            <person name="Watanabe M."/>
            <person name="Hiraoka S."/>
            <person name="Chiba Y."/>
            <person name="Ishida S."/>
            <person name="Ono Y."/>
            <person name="Takiguchi S."/>
            <person name="Watanabe S."/>
            <person name="Yosida M."/>
            <person name="Hotuta T."/>
            <person name="Kusano J."/>
            <person name="Kanehori K."/>
            <person name="Takahashi-Fujii A."/>
            <person name="Hara H."/>
            <person name="Tanase T.-O."/>
            <person name="Nomura Y."/>
            <person name="Togiya S."/>
            <person name="Komai F."/>
            <person name="Hara R."/>
            <person name="Takeuchi K."/>
            <person name="Arita M."/>
            <person name="Imose N."/>
            <person name="Musashino K."/>
            <person name="Yuuki H."/>
            <person name="Oshima A."/>
            <person name="Sasaki N."/>
            <person name="Aotsuka S."/>
            <person name="Yoshikawa Y."/>
            <person name="Matsunawa H."/>
            <person name="Ichihara T."/>
            <person name="Shiohata N."/>
            <person name="Sano S."/>
            <person name="Moriya S."/>
            <person name="Momiyama H."/>
            <person name="Satoh N."/>
            <person name="Takami S."/>
            <person name="Terashima Y."/>
            <person name="Suzuki O."/>
            <person name="Nakagawa S."/>
            <person name="Senoh A."/>
            <person name="Mizoguchi H."/>
            <person name="Goto Y."/>
            <person name="Shimizu F."/>
            <person name="Wakebe H."/>
            <person name="Hishigaki H."/>
            <person name="Watanabe T."/>
            <person name="Sugiyama A."/>
            <person name="Takemoto M."/>
            <person name="Kawakami B."/>
            <person name="Yamazaki M."/>
            <person name="Watanabe K."/>
            <person name="Kumagai A."/>
            <person name="Itakura S."/>
            <person name="Fukuzumi Y."/>
            <person name="Fujimori Y."/>
            <person name="Komiyama M."/>
            <person name="Tashiro H."/>
            <person name="Tanigami A."/>
            <person name="Fujiwara T."/>
            <person name="Ono T."/>
            <person name="Yamada K."/>
            <person name="Fujii Y."/>
            <person name="Ozaki K."/>
            <person name="Hirao M."/>
            <person name="Ohmori Y."/>
            <person name="Kawabata A."/>
            <person name="Hikiji T."/>
            <person name="Kobatake N."/>
            <person name="Inagaki H."/>
            <person name="Ikema Y."/>
            <person name="Okamoto S."/>
            <person name="Okitani R."/>
            <person name="Kawakami T."/>
            <person name="Noguchi S."/>
            <person name="Itoh T."/>
            <person name="Shigeta K."/>
            <person name="Senba T."/>
            <person name="Matsumura K."/>
            <person name="Nakajima Y."/>
            <person name="Mizuno T."/>
            <person name="Morinaga M."/>
            <person name="Sasaki M."/>
            <person name="Togashi T."/>
            <person name="Oyama M."/>
            <person name="Hata H."/>
            <person name="Watanabe M."/>
            <person name="Komatsu T."/>
            <person name="Mizushima-Sugano J."/>
            <person name="Satoh T."/>
            <person name="Shirai Y."/>
            <person name="Takahashi Y."/>
            <person name="Nakagawa K."/>
            <person name="Okumura K."/>
            <person name="Nagase T."/>
            <person name="Nomura N."/>
            <person name="Kikuchi H."/>
            <person name="Masuho Y."/>
            <person name="Yamashita R."/>
            <person name="Nakai K."/>
            <person name="Yada T."/>
            <person name="Nakamura Y."/>
            <person name="Ohara O."/>
            <person name="Isogai T."/>
            <person name="Sugano S."/>
        </authorList>
    </citation>
    <scope>NUCLEOTIDE SEQUENCE [LARGE SCALE MRNA] (ISOFORM 1)</scope>
    <source>
        <tissue>Hippocampus</tissue>
    </source>
</reference>
<reference key="2">
    <citation type="journal article" date="2006" name="Nature">
        <title>The DNA sequence, annotation and analysis of human chromosome 3.</title>
        <authorList>
            <person name="Muzny D.M."/>
            <person name="Scherer S.E."/>
            <person name="Kaul R."/>
            <person name="Wang J."/>
            <person name="Yu J."/>
            <person name="Sudbrak R."/>
            <person name="Buhay C.J."/>
            <person name="Chen R."/>
            <person name="Cree A."/>
            <person name="Ding Y."/>
            <person name="Dugan-Rocha S."/>
            <person name="Gill R."/>
            <person name="Gunaratne P."/>
            <person name="Harris R.A."/>
            <person name="Hawes A.C."/>
            <person name="Hernandez J."/>
            <person name="Hodgson A.V."/>
            <person name="Hume J."/>
            <person name="Jackson A."/>
            <person name="Khan Z.M."/>
            <person name="Kovar-Smith C."/>
            <person name="Lewis L.R."/>
            <person name="Lozado R.J."/>
            <person name="Metzker M.L."/>
            <person name="Milosavljevic A."/>
            <person name="Miner G.R."/>
            <person name="Morgan M.B."/>
            <person name="Nazareth L.V."/>
            <person name="Scott G."/>
            <person name="Sodergren E."/>
            <person name="Song X.-Z."/>
            <person name="Steffen D."/>
            <person name="Wei S."/>
            <person name="Wheeler D.A."/>
            <person name="Wright M.W."/>
            <person name="Worley K.C."/>
            <person name="Yuan Y."/>
            <person name="Zhang Z."/>
            <person name="Adams C.Q."/>
            <person name="Ansari-Lari M.A."/>
            <person name="Ayele M."/>
            <person name="Brown M.J."/>
            <person name="Chen G."/>
            <person name="Chen Z."/>
            <person name="Clendenning J."/>
            <person name="Clerc-Blankenburg K.P."/>
            <person name="Chen R."/>
            <person name="Chen Z."/>
            <person name="Davis C."/>
            <person name="Delgado O."/>
            <person name="Dinh H.H."/>
            <person name="Dong W."/>
            <person name="Draper H."/>
            <person name="Ernst S."/>
            <person name="Fu G."/>
            <person name="Gonzalez-Garay M.L."/>
            <person name="Garcia D.K."/>
            <person name="Gillett W."/>
            <person name="Gu J."/>
            <person name="Hao B."/>
            <person name="Haugen E."/>
            <person name="Havlak P."/>
            <person name="He X."/>
            <person name="Hennig S."/>
            <person name="Hu S."/>
            <person name="Huang W."/>
            <person name="Jackson L.R."/>
            <person name="Jacob L.S."/>
            <person name="Kelly S.H."/>
            <person name="Kube M."/>
            <person name="Levy R."/>
            <person name="Li Z."/>
            <person name="Liu B."/>
            <person name="Liu J."/>
            <person name="Liu W."/>
            <person name="Lu J."/>
            <person name="Maheshwari M."/>
            <person name="Nguyen B.-V."/>
            <person name="Okwuonu G.O."/>
            <person name="Palmeiri A."/>
            <person name="Pasternak S."/>
            <person name="Perez L.M."/>
            <person name="Phelps K.A."/>
            <person name="Plopper F.J."/>
            <person name="Qiang B."/>
            <person name="Raymond C."/>
            <person name="Rodriguez R."/>
            <person name="Saenphimmachak C."/>
            <person name="Santibanez J."/>
            <person name="Shen H."/>
            <person name="Shen Y."/>
            <person name="Subramanian S."/>
            <person name="Tabor P.E."/>
            <person name="Verduzco D."/>
            <person name="Waldron L."/>
            <person name="Wang J."/>
            <person name="Wang J."/>
            <person name="Wang Q."/>
            <person name="Williams G.A."/>
            <person name="Wong G.K.-S."/>
            <person name="Yao Z."/>
            <person name="Zhang J."/>
            <person name="Zhang X."/>
            <person name="Zhao G."/>
            <person name="Zhou J."/>
            <person name="Zhou Y."/>
            <person name="Nelson D."/>
            <person name="Lehrach H."/>
            <person name="Reinhardt R."/>
            <person name="Naylor S.L."/>
            <person name="Yang H."/>
            <person name="Olson M."/>
            <person name="Weinstock G."/>
            <person name="Gibbs R.A."/>
        </authorList>
    </citation>
    <scope>NUCLEOTIDE SEQUENCE [LARGE SCALE GENOMIC DNA]</scope>
</reference>
<reference key="3">
    <citation type="submission" date="2011-07" db="EMBL/GenBank/DDBJ databases">
        <authorList>
            <person name="Mural R.J."/>
            <person name="Istrail S."/>
            <person name="Sutton G.G."/>
            <person name="Florea L."/>
            <person name="Halpern A.L."/>
            <person name="Mobarry C.M."/>
            <person name="Lippert R."/>
            <person name="Walenz B."/>
            <person name="Shatkay H."/>
            <person name="Dew I."/>
            <person name="Miller J.R."/>
            <person name="Flanigan M.J."/>
            <person name="Edwards N.J."/>
            <person name="Bolanos R."/>
            <person name="Fasulo D."/>
            <person name="Halldorsson B.V."/>
            <person name="Hannenhalli S."/>
            <person name="Turner R."/>
            <person name="Yooseph S."/>
            <person name="Lu F."/>
            <person name="Nusskern D.R."/>
            <person name="Shue B.C."/>
            <person name="Zheng X.H."/>
            <person name="Zhong F."/>
            <person name="Delcher A.L."/>
            <person name="Huson D.H."/>
            <person name="Kravitz S.A."/>
            <person name="Mouchard L."/>
            <person name="Reinert K."/>
            <person name="Remington K.A."/>
            <person name="Clark A.G."/>
            <person name="Waterman M.S."/>
            <person name="Eichler E.E."/>
            <person name="Adams M.D."/>
            <person name="Hunkapiller M.W."/>
            <person name="Myers E.W."/>
            <person name="Venter J.C."/>
        </authorList>
    </citation>
    <scope>NUCLEOTIDE SEQUENCE [LARGE SCALE GENOMIC DNA]</scope>
</reference>
<reference key="4">
    <citation type="journal article" date="2004" name="Genome Res.">
        <title>The status, quality, and expansion of the NIH full-length cDNA project: the Mammalian Gene Collection (MGC).</title>
        <authorList>
            <consortium name="The MGC Project Team"/>
        </authorList>
    </citation>
    <scope>NUCLEOTIDE SEQUENCE [LARGE SCALE MRNA] (ISOFORM 2)</scope>
    <source>
        <tissue>Skin</tissue>
    </source>
</reference>
<reference key="5">
    <citation type="journal article" date="2012" name="Mol. Cell. Proteomics">
        <title>Comparative large-scale characterisation of plant vs. mammal proteins reveals similar and idiosyncratic N-alpha acetylation features.</title>
        <authorList>
            <person name="Bienvenut W.V."/>
            <person name="Sumpton D."/>
            <person name="Martinez A."/>
            <person name="Lilla S."/>
            <person name="Espagne C."/>
            <person name="Meinnel T."/>
            <person name="Giglione C."/>
        </authorList>
    </citation>
    <scope>IDENTIFICATION BY MASS SPECTROMETRY [LARGE SCALE ANALYSIS]</scope>
</reference>
<reference key="6">
    <citation type="journal article" date="2015" name="Proteomics">
        <title>N-terminome analysis of the human mitochondrial proteome.</title>
        <authorList>
            <person name="Vaca Jacome A.S."/>
            <person name="Rabilloud T."/>
            <person name="Schaeffer-Reiss C."/>
            <person name="Rompais M."/>
            <person name="Ayoub D."/>
            <person name="Lane L."/>
            <person name="Bairoch A."/>
            <person name="Van Dorsselaer A."/>
            <person name="Carapito C."/>
        </authorList>
    </citation>
    <scope>IDENTIFICATION BY MASS SPECTROMETRY [LARGE SCALE ANALYSIS]</scope>
</reference>
<reference key="7">
    <citation type="journal article" date="2022" name="HGG Adv.">
        <title>Biallelic variants in TAMM41 are associated with low muscle cardiolipin levels, leading to neonatal mitochondrial disease.</title>
        <authorList>
            <person name="Thompson K."/>
            <person name="Bianchi L."/>
            <person name="Rastelli F."/>
            <person name="Piron-Prunier F."/>
            <person name="Ayciriex S."/>
            <person name="Besmond C."/>
            <person name="Hubert L."/>
            <person name="Barth M."/>
            <person name="Barbosa I.A."/>
            <person name="Deshpande C."/>
            <person name="Chitre M."/>
            <person name="Mehta S.G."/>
            <person name="Wever E.J.M."/>
            <person name="Marcorelles P."/>
            <person name="Donkervoort S."/>
            <person name="Saade D."/>
            <person name="Boennemann C.G."/>
            <person name="Chao K.R."/>
            <person name="Cai C."/>
            <person name="Iannaccone S.T."/>
            <person name="Dean A.F."/>
            <person name="McFarland R."/>
            <person name="Vaz F.M."/>
            <person name="Delahodde A."/>
            <person name="Taylor R.W."/>
            <person name="Roetig A."/>
        </authorList>
    </citation>
    <scope>INVOLVEMENT IN COXPD56</scope>
    <scope>VARIANTS COXPD56 PRO-86; CYS-110 AND LEU-137</scope>
    <scope>CHARACTERIZATION OF VARIANTS COXPD56 PRO-86; CYS-110 AND LEU-137</scope>
</reference>
<gene>
    <name type="primary">TAMM41</name>
    <name type="synonym">C3orf31</name>
</gene>
<organism>
    <name type="scientific">Homo sapiens</name>
    <name type="common">Human</name>
    <dbReference type="NCBI Taxonomy" id="9606"/>
    <lineage>
        <taxon>Eukaryota</taxon>
        <taxon>Metazoa</taxon>
        <taxon>Chordata</taxon>
        <taxon>Craniata</taxon>
        <taxon>Vertebrata</taxon>
        <taxon>Euteleostomi</taxon>
        <taxon>Mammalia</taxon>
        <taxon>Eutheria</taxon>
        <taxon>Euarchontoglires</taxon>
        <taxon>Primates</taxon>
        <taxon>Haplorrhini</taxon>
        <taxon>Catarrhini</taxon>
        <taxon>Hominidae</taxon>
        <taxon>Homo</taxon>
    </lineage>
</organism>
<comment type="function">
    <text evidence="1">Catalyzes the conversion of phosphatidic acid (PA) to CDP-diacylglycerol (CDP-DAG), an essential intermediate in the synthesis of phosphatidylglycerol, cardiolipin and phosphatidylinositol.</text>
</comment>
<comment type="catalytic activity">
    <reaction evidence="1">
        <text>a 1,2-diacyl-sn-glycero-3-phosphate + CTP + H(+) = a CDP-1,2-diacyl-sn-glycerol + diphosphate</text>
        <dbReference type="Rhea" id="RHEA:16229"/>
        <dbReference type="ChEBI" id="CHEBI:15378"/>
        <dbReference type="ChEBI" id="CHEBI:33019"/>
        <dbReference type="ChEBI" id="CHEBI:37563"/>
        <dbReference type="ChEBI" id="CHEBI:58332"/>
        <dbReference type="ChEBI" id="CHEBI:58608"/>
        <dbReference type="EC" id="2.7.7.41"/>
    </reaction>
    <physiologicalReaction direction="left-to-right" evidence="1">
        <dbReference type="Rhea" id="RHEA:16230"/>
    </physiologicalReaction>
</comment>
<comment type="cofactor">
    <cofactor evidence="2">
        <name>Mg(2+)</name>
        <dbReference type="ChEBI" id="CHEBI:18420"/>
    </cofactor>
</comment>
<comment type="pathway">
    <text evidence="1">Phospholipid metabolism; CDP-diacylglycerol biosynthesis; CDP-diacylglycerol from sn-glycerol 3-phosphate: step 3/3.</text>
</comment>
<comment type="interaction">
    <interactant intactId="EBI-13943422">
        <id>Q96BW9</id>
    </interactant>
    <interactant intactId="EBI-2558394">
        <id>P06744</id>
        <label>GPI</label>
    </interactant>
    <organismsDiffer>false</organismsDiffer>
    <experiments>3</experiments>
</comment>
<comment type="subcellular location">
    <subcellularLocation>
        <location evidence="1">Mitochondrion inner membrane</location>
        <topology evidence="1">Peripheral membrane protein</topology>
        <orientation evidence="2">Matrix side</orientation>
    </subcellularLocation>
</comment>
<comment type="alternative products">
    <event type="alternative splicing"/>
    <isoform>
        <id>Q96BW9-1</id>
        <name>1</name>
        <sequence type="displayed"/>
    </isoform>
    <isoform>
        <id>Q96BW9-2</id>
        <name>2</name>
        <sequence type="described" ref="VSP_053905 VSP_053906"/>
    </isoform>
    <isoform>
        <id>Q96BW9-3</id>
        <name>3</name>
        <sequence type="described" ref="VSP_055724 VSP_055725"/>
    </isoform>
</comment>
<comment type="disease" evidence="3">
    <disease id="DI-06553">
        <name>Combined oxidative phosphorylation deficiency 56</name>
        <acronym>COXPD56</acronym>
        <description>An autosomal recessive mitochondrial disease characterized by lethargy at birth, hypotonia, developmental delay, myopathy, and ptosis.</description>
        <dbReference type="MIM" id="620139"/>
    </disease>
    <text>The disease may be caused by variants affecting the gene represented in this entry.</text>
</comment>
<comment type="similarity">
    <text evidence="5">Belongs to the TAM41 family.</text>
</comment>
<sequence>MALQTLQSSWVTFRKILSHFPEELSLAFVYGSGVYRQAGPSSDQKNAMLDFVFTVDDPVAWHSKNLKKNWSHYSFLKVLGPKIITSIQNNYGAGVYYNSLIMCNGRLIKYGVISTNVLIEDLLNWNNLYIAGRLQKPVKIISVNEDVTLRSALDRNLKSAVTAAFLMLPESFSEEDLFIEIAGLSYSGDFRMVVGEDKTKVLNIVKPNIAHFRELYGSILQENPQVVYKSQQGWLEIDKSPEGQFTQLMTLPKTLQQQINHIMDPPGKNRDVEETLFQVAHDPDCGDVVRLGLSAIVRPSSIRQSTKGIFTAGKSFGNPCVTYLLTEWLPHSWLQCKALYLLGACEMLSFDGHKLGYCSKVQTGITAAEPGGRTMSDHWQCCWKLYCPSEFSETLPVCRVFPSYCFIYQSYRCIGLQKQQHLCSPSSSPSLRQLLPSVLVGYFCCYCHFSKW</sequence>
<proteinExistence type="evidence at protein level"/>